<comment type="function">
    <text>The light-harvesting complex (LHC) functions as a light receptor, it captures and delivers excitation energy to photosystems with which it is closely associated.</text>
</comment>
<comment type="cofactor">
    <text evidence="1">Binds at least 14 chlorophylls (8 Chl-a and 6 Chl-b) and carotenoids such as lutein and neoxanthin.</text>
</comment>
<comment type="subunit">
    <text>The LHC complex consists of chlorophyll a-b binding proteins.</text>
</comment>
<comment type="subcellular location">
    <subcellularLocation>
        <location>Plastid</location>
        <location>Chloroplast thylakoid membrane</location>
        <topology>Multi-pass membrane protein</topology>
    </subcellularLocation>
</comment>
<comment type="domain">
    <text>The N-terminus of the protein extends into the stroma where it is involved with adhesion of granal membranes and post-translational modifications; both are believed to mediate the distribution of excitation energy between photosystems I and II.</text>
</comment>
<comment type="PTM">
    <text evidence="1">Photoregulated by reversible phosphorylation of its threonine residues.</text>
</comment>
<comment type="similarity">
    <text evidence="5">Belongs to the light-harvesting chlorophyll a/b-binding (LHC) protein family.</text>
</comment>
<reference key="1">
    <citation type="journal article" date="1988" name="Nucleic Acids Res.">
        <title>Isolation, characterization and evolutionary relatedness of three members from the soybean multigene family encoding chlorophyll a/b binding proteins.</title>
        <authorList>
            <person name="Walling L.L."/>
            <person name="Chang Y.C."/>
            <person name="Demmin D.S."/>
            <person name="Holzer F.M."/>
        </authorList>
    </citation>
    <scope>NUCLEOTIDE SEQUENCE [GENOMIC DNA]</scope>
    <source>
        <strain>cv. Forrest</strain>
    </source>
</reference>
<proteinExistence type="inferred from homology"/>
<dbReference type="EMBL" id="X12980">
    <property type="protein sequence ID" value="CAA31418.1"/>
    <property type="molecule type" value="Genomic_DNA"/>
</dbReference>
<dbReference type="PIR" id="S01961">
    <property type="entry name" value="S01961"/>
</dbReference>
<dbReference type="SMR" id="P09755"/>
<dbReference type="FunCoup" id="P09755">
    <property type="interactions" value="1938"/>
</dbReference>
<dbReference type="STRING" id="3847.P09755"/>
<dbReference type="HOGENOM" id="CLU_057943_2_0_1"/>
<dbReference type="InParanoid" id="P09755"/>
<dbReference type="Proteomes" id="UP000008827">
    <property type="component" value="Unplaced"/>
</dbReference>
<dbReference type="GO" id="GO:0009535">
    <property type="term" value="C:chloroplast thylakoid membrane"/>
    <property type="evidence" value="ECO:0000318"/>
    <property type="project" value="GO_Central"/>
</dbReference>
<dbReference type="GO" id="GO:0009522">
    <property type="term" value="C:photosystem I"/>
    <property type="evidence" value="ECO:0007669"/>
    <property type="project" value="UniProtKB-KW"/>
</dbReference>
<dbReference type="GO" id="GO:0009523">
    <property type="term" value="C:photosystem II"/>
    <property type="evidence" value="ECO:0007669"/>
    <property type="project" value="UniProtKB-KW"/>
</dbReference>
<dbReference type="GO" id="GO:0016168">
    <property type="term" value="F:chlorophyll binding"/>
    <property type="evidence" value="ECO:0007669"/>
    <property type="project" value="UniProtKB-KW"/>
</dbReference>
<dbReference type="GO" id="GO:0046872">
    <property type="term" value="F:metal ion binding"/>
    <property type="evidence" value="ECO:0007669"/>
    <property type="project" value="UniProtKB-KW"/>
</dbReference>
<dbReference type="GO" id="GO:0009768">
    <property type="term" value="P:photosynthesis, light harvesting in photosystem I"/>
    <property type="evidence" value="ECO:0000318"/>
    <property type="project" value="GO_Central"/>
</dbReference>
<dbReference type="GO" id="GO:0009416">
    <property type="term" value="P:response to light stimulus"/>
    <property type="evidence" value="ECO:0000318"/>
    <property type="project" value="GO_Central"/>
</dbReference>
<dbReference type="FunFam" id="1.10.3460.10:FF:000001">
    <property type="entry name" value="Chlorophyll a-b binding protein, chloroplastic"/>
    <property type="match status" value="1"/>
</dbReference>
<dbReference type="Gene3D" id="1.10.3460.10">
    <property type="entry name" value="Chlorophyll a/b binding protein domain"/>
    <property type="match status" value="1"/>
</dbReference>
<dbReference type="InterPro" id="IPR001344">
    <property type="entry name" value="Chloro_AB-bd_pln"/>
</dbReference>
<dbReference type="InterPro" id="IPR022796">
    <property type="entry name" value="Chloroa_b-bind"/>
</dbReference>
<dbReference type="PANTHER" id="PTHR21649">
    <property type="entry name" value="CHLOROPHYLL A/B BINDING PROTEIN"/>
    <property type="match status" value="1"/>
</dbReference>
<dbReference type="Pfam" id="PF00504">
    <property type="entry name" value="Chloroa_b-bind"/>
    <property type="match status" value="1"/>
</dbReference>
<dbReference type="SUPFAM" id="SSF103511">
    <property type="entry name" value="Chlorophyll a-b binding protein"/>
    <property type="match status" value="1"/>
</dbReference>
<accession>P09755</accession>
<gene>
    <name type="primary">CAB2</name>
</gene>
<sequence length="256" mass="27122">MAASTMALSSSSLAGQAMKLAPSTPELGVGRVSMRKTAPKTVSSGSPWYGPDRVKYLGPFSGEAPSYLTGEFHGLSADPETFAKNRELEVIHSRWAMLGALGCVFPELLARNGVKFGEAVWFKAGSQIFSEGGLDYLGNPSLIHAQSILAIWATQVILMGAVEGYRIAGGPLGEVTDPIYPGGSFDPLGLADDPEALAELKVKELKNGRLAMFSMFGFFVQAIVTGKGPLENLADHLADPVNNNAWAYATKLCPGK</sequence>
<protein>
    <recommendedName>
        <fullName>Chlorophyll a-b binding protein 2, chloroplastic</fullName>
    </recommendedName>
    <alternativeName>
        <fullName>LHCII type I CAB-2</fullName>
        <shortName>LHCP</shortName>
    </alternativeName>
</protein>
<organism>
    <name type="scientific">Glycine max</name>
    <name type="common">Soybean</name>
    <name type="synonym">Glycine hispida</name>
    <dbReference type="NCBI Taxonomy" id="3847"/>
    <lineage>
        <taxon>Eukaryota</taxon>
        <taxon>Viridiplantae</taxon>
        <taxon>Streptophyta</taxon>
        <taxon>Embryophyta</taxon>
        <taxon>Tracheophyta</taxon>
        <taxon>Spermatophyta</taxon>
        <taxon>Magnoliopsida</taxon>
        <taxon>eudicotyledons</taxon>
        <taxon>Gunneridae</taxon>
        <taxon>Pentapetalae</taxon>
        <taxon>rosids</taxon>
        <taxon>fabids</taxon>
        <taxon>Fabales</taxon>
        <taxon>Fabaceae</taxon>
        <taxon>Papilionoideae</taxon>
        <taxon>50 kb inversion clade</taxon>
        <taxon>NPAAA clade</taxon>
        <taxon>indigoferoid/millettioid clade</taxon>
        <taxon>Phaseoleae</taxon>
        <taxon>Glycine</taxon>
        <taxon>Glycine subgen. Soja</taxon>
    </lineage>
</organism>
<evidence type="ECO:0000250" key="1"/>
<evidence type="ECO:0000250" key="2">
    <source>
        <dbReference type="UniProtKB" id="P07371"/>
    </source>
</evidence>
<evidence type="ECO:0000250" key="3">
    <source>
        <dbReference type="UniProtKB" id="P12333"/>
    </source>
</evidence>
<evidence type="ECO:0000255" key="4"/>
<evidence type="ECO:0000305" key="5"/>
<feature type="transit peptide" description="Chloroplast" evidence="5">
    <location>
        <begin position="1"/>
        <end position="34"/>
    </location>
</feature>
<feature type="chain" id="PRO_0000003698" description="Chlorophyll a-b binding protein 2, chloroplastic">
    <location>
        <begin position="35"/>
        <end position="256"/>
    </location>
</feature>
<feature type="transmembrane region" description="Helical" evidence="4">
    <location>
        <begin position="90"/>
        <end position="110"/>
    </location>
</feature>
<feature type="transmembrane region" description="Helical" evidence="4">
    <location>
        <begin position="142"/>
        <end position="162"/>
    </location>
</feature>
<feature type="transmembrane region" description="Helical" evidence="4">
    <location>
        <begin position="210"/>
        <end position="230"/>
    </location>
</feature>
<feature type="binding site" description="axial binding residue" evidence="3">
    <location>
        <position position="56"/>
    </location>
    <ligand>
        <name>chlorophyll b</name>
        <dbReference type="ChEBI" id="CHEBI:61721"/>
        <label>1</label>
    </ligand>
    <ligandPart>
        <name>Mg</name>
        <dbReference type="ChEBI" id="CHEBI:25107"/>
    </ligandPart>
</feature>
<feature type="binding site" evidence="1">
    <location>
        <position position="76"/>
    </location>
    <ligand>
        <name>chlorophyll a</name>
        <dbReference type="ChEBI" id="CHEBI:58416"/>
        <label>1</label>
    </ligand>
</feature>
<feature type="binding site" description="axial binding residue" evidence="3">
    <location>
        <position position="89"/>
    </location>
    <ligand>
        <name>chlorophyll a</name>
        <dbReference type="ChEBI" id="CHEBI:58416"/>
        <label>1</label>
    </ligand>
    <ligandPart>
        <name>Mg</name>
        <dbReference type="ChEBI" id="CHEBI:25107"/>
    </ligandPart>
</feature>
<feature type="binding site" description="axial binding residue" evidence="3">
    <location>
        <position position="92"/>
    </location>
    <ligand>
        <name>chlorophyll a</name>
        <dbReference type="ChEBI" id="CHEBI:58416"/>
        <label>2</label>
    </ligand>
    <ligandPart>
        <name>Mg</name>
        <dbReference type="ChEBI" id="CHEBI:25107"/>
    </ligandPart>
</feature>
<feature type="binding site" evidence="1">
    <location>
        <position position="94"/>
    </location>
    <ligand>
        <name>chlorophyll b</name>
        <dbReference type="ChEBI" id="CHEBI:61721"/>
        <label>2</label>
    </ligand>
</feature>
<feature type="binding site" evidence="1">
    <location>
        <position position="127"/>
    </location>
    <ligand>
        <name>chlorophyll a</name>
        <dbReference type="ChEBI" id="CHEBI:58416"/>
        <label>3</label>
    </ligand>
</feature>
<feature type="binding site" evidence="1">
    <location>
        <position position="137"/>
    </location>
    <ligand>
        <name>chlorophyll a</name>
        <dbReference type="ChEBI" id="CHEBI:58416"/>
        <label>3</label>
    </ligand>
</feature>
<feature type="binding site" description="axial binding residue" evidence="1">
    <location>
        <position position="143"/>
    </location>
    <ligand>
        <name>chlorophyll b</name>
        <dbReference type="ChEBI" id="CHEBI:61721"/>
        <label>2</label>
    </ligand>
    <ligandPart>
        <name>Mg</name>
        <dbReference type="ChEBI" id="CHEBI:25107"/>
    </ligandPart>
</feature>
<feature type="binding site" evidence="1">
    <location>
        <position position="147"/>
    </location>
    <ligand>
        <name>chlorophyll b</name>
        <dbReference type="ChEBI" id="CHEBI:61721"/>
        <label>3</label>
    </ligand>
</feature>
<feature type="binding site" evidence="1">
    <location>
        <position position="155"/>
    </location>
    <ligand>
        <name>chlorophyll b</name>
        <dbReference type="ChEBI" id="CHEBI:61721"/>
        <label>4</label>
    </ligand>
</feature>
<feature type="binding site" evidence="2">
    <location>
        <position position="155"/>
    </location>
    <ligand>
        <name>chlorophyll b</name>
        <dbReference type="ChEBI" id="CHEBI:61721"/>
        <label>5</label>
    </ligand>
</feature>
<feature type="binding site" description="axial binding residue" evidence="3">
    <location>
        <position position="163"/>
    </location>
    <ligand>
        <name>chlorophyll b</name>
        <dbReference type="ChEBI" id="CHEBI:61721"/>
        <label>3</label>
    </ligand>
    <ligandPart>
        <name>Mg</name>
        <dbReference type="ChEBI" id="CHEBI:25107"/>
    </ligandPart>
</feature>
<feature type="binding site" evidence="1">
    <location>
        <position position="166"/>
    </location>
    <ligand>
        <name>chlorophyll b</name>
        <dbReference type="ChEBI" id="CHEBI:61721"/>
        <label>4</label>
    </ligand>
</feature>
<feature type="binding site" evidence="1">
    <location>
        <position position="172"/>
    </location>
    <ligand>
        <name>chlorophyll b</name>
        <dbReference type="ChEBI" id="CHEBI:61721"/>
        <label>2</label>
    </ligand>
</feature>
<feature type="binding site" evidence="1">
    <location>
        <position position="203"/>
    </location>
    <ligand>
        <name>chlorophyll a</name>
        <dbReference type="ChEBI" id="CHEBI:58416"/>
        <label>5</label>
    </ligand>
</feature>
<feature type="binding site" description="axial binding residue" evidence="3">
    <location>
        <position position="204"/>
    </location>
    <ligand>
        <name>chlorophyll a</name>
        <dbReference type="ChEBI" id="CHEBI:58416"/>
        <label>3</label>
    </ligand>
    <ligandPart>
        <name>Mg</name>
        <dbReference type="ChEBI" id="CHEBI:25107"/>
    </ligandPart>
</feature>
<feature type="binding site" description="axial binding residue" evidence="3">
    <location>
        <position position="207"/>
    </location>
    <ligand>
        <name>chlorophyll a</name>
        <dbReference type="ChEBI" id="CHEBI:58416"/>
        <label>4</label>
    </ligand>
    <ligandPart>
        <name>Mg</name>
        <dbReference type="ChEBI" id="CHEBI:25107"/>
    </ligandPart>
</feature>
<feature type="binding site" evidence="1">
    <location>
        <position position="209"/>
    </location>
    <ligand>
        <name>chlorophyll a</name>
        <dbReference type="ChEBI" id="CHEBI:58416"/>
        <label>1</label>
    </ligand>
</feature>
<feature type="binding site" description="axial binding residue" evidence="3">
    <location>
        <position position="221"/>
    </location>
    <ligand>
        <name>chlorophyll a</name>
        <dbReference type="ChEBI" id="CHEBI:58416"/>
        <label>5</label>
    </ligand>
    <ligandPart>
        <name>Mg</name>
        <dbReference type="ChEBI" id="CHEBI:25107"/>
    </ligandPart>
</feature>
<feature type="binding site" description="axial binding residue" evidence="3">
    <location>
        <position position="236"/>
    </location>
    <ligand>
        <name>chlorophyll a</name>
        <dbReference type="ChEBI" id="CHEBI:58416"/>
        <label>6</label>
    </ligand>
    <ligandPart>
        <name>Mg</name>
        <dbReference type="ChEBI" id="CHEBI:25107"/>
    </ligandPart>
</feature>
<feature type="binding site" evidence="1">
    <location>
        <position position="245"/>
    </location>
    <ligand>
        <name>chlorophyll a</name>
        <dbReference type="ChEBI" id="CHEBI:58416"/>
        <label>6</label>
    </ligand>
</feature>
<feature type="modified residue" description="N2-acetylarginine" evidence="1">
    <location>
        <position position="35"/>
    </location>
</feature>
<feature type="modified residue" description="Phosphothreonine" evidence="1">
    <location>
        <position position="37"/>
    </location>
</feature>
<keyword id="KW-0007">Acetylation</keyword>
<keyword id="KW-0148">Chlorophyll</keyword>
<keyword id="KW-0150">Chloroplast</keyword>
<keyword id="KW-0157">Chromophore</keyword>
<keyword id="KW-0460">Magnesium</keyword>
<keyword id="KW-0472">Membrane</keyword>
<keyword id="KW-0479">Metal-binding</keyword>
<keyword id="KW-0597">Phosphoprotein</keyword>
<keyword id="KW-0602">Photosynthesis</keyword>
<keyword id="KW-0603">Photosystem I</keyword>
<keyword id="KW-0604">Photosystem II</keyword>
<keyword id="KW-0934">Plastid</keyword>
<keyword id="KW-1185">Reference proteome</keyword>
<keyword id="KW-0793">Thylakoid</keyword>
<keyword id="KW-0809">Transit peptide</keyword>
<keyword id="KW-0812">Transmembrane</keyword>
<keyword id="KW-1133">Transmembrane helix</keyword>
<name>CB22_SOYBN</name>